<name>ABDH_SALTY</name>
<evidence type="ECO:0000255" key="1">
    <source>
        <dbReference type="HAMAP-Rule" id="MF_01275"/>
    </source>
</evidence>
<evidence type="ECO:0000305" key="2"/>
<evidence type="ECO:0007829" key="3">
    <source>
        <dbReference type="PDB" id="6C43"/>
    </source>
</evidence>
<organism>
    <name type="scientific">Salmonella typhimurium (strain LT2 / SGSC1412 / ATCC 700720)</name>
    <dbReference type="NCBI Taxonomy" id="99287"/>
    <lineage>
        <taxon>Bacteria</taxon>
        <taxon>Pseudomonadati</taxon>
        <taxon>Pseudomonadota</taxon>
        <taxon>Gammaproteobacteria</taxon>
        <taxon>Enterobacterales</taxon>
        <taxon>Enterobacteriaceae</taxon>
        <taxon>Salmonella</taxon>
    </lineage>
</organism>
<proteinExistence type="evidence at protein level"/>
<reference key="1">
    <citation type="journal article" date="2001" name="Nature">
        <title>Complete genome sequence of Salmonella enterica serovar Typhimurium LT2.</title>
        <authorList>
            <person name="McClelland M."/>
            <person name="Sanderson K.E."/>
            <person name="Spieth J."/>
            <person name="Clifton S.W."/>
            <person name="Latreille P."/>
            <person name="Courtney L."/>
            <person name="Porwollik S."/>
            <person name="Ali J."/>
            <person name="Dante M."/>
            <person name="Du F."/>
            <person name="Hou S."/>
            <person name="Layman D."/>
            <person name="Leonard S."/>
            <person name="Nguyen C."/>
            <person name="Scott K."/>
            <person name="Holmes A."/>
            <person name="Grewal N."/>
            <person name="Mulvaney E."/>
            <person name="Ryan E."/>
            <person name="Sun H."/>
            <person name="Florea L."/>
            <person name="Miller W."/>
            <person name="Stoneking T."/>
            <person name="Nhan M."/>
            <person name="Waterston R."/>
            <person name="Wilson R.K."/>
        </authorList>
    </citation>
    <scope>NUCLEOTIDE SEQUENCE [LARGE SCALE GENOMIC DNA]</scope>
    <source>
        <strain>LT2 / SGSC1412 / ATCC 700720</strain>
    </source>
</reference>
<comment type="function">
    <text evidence="1">Catalyzes the oxidation 4-aminobutanal (gamma-aminobutyraldehyde) to 4-aminobutanoate (gamma-aminobutyrate or GABA). This is the second step in one of two pathways for putrescine degradation, where putrescine is converted into 4-aminobutanoate via 4-aminobutanal. Also functions as a 5-aminopentanal dehydrogenase in a a L-lysine degradation pathway to succinate that proceeds via cadaverine, glutarate and L-2-hydroxyglutarate.</text>
</comment>
<comment type="catalytic activity">
    <reaction evidence="1">
        <text>4-aminobutanal + NAD(+) + H2O = 4-aminobutanoate + NADH + 2 H(+)</text>
        <dbReference type="Rhea" id="RHEA:19105"/>
        <dbReference type="ChEBI" id="CHEBI:15377"/>
        <dbReference type="ChEBI" id="CHEBI:15378"/>
        <dbReference type="ChEBI" id="CHEBI:57540"/>
        <dbReference type="ChEBI" id="CHEBI:57945"/>
        <dbReference type="ChEBI" id="CHEBI:58264"/>
        <dbReference type="ChEBI" id="CHEBI:59888"/>
        <dbReference type="EC" id="1.2.1.19"/>
    </reaction>
    <physiologicalReaction direction="left-to-right" evidence="1">
        <dbReference type="Rhea" id="RHEA:19106"/>
    </physiologicalReaction>
</comment>
<comment type="catalytic activity">
    <reaction evidence="1">
        <text>5-aminopentanal + NAD(+) + H2O = 5-aminopentanoate + NADH + 2 H(+)</text>
        <dbReference type="Rhea" id="RHEA:61632"/>
        <dbReference type="ChEBI" id="CHEBI:15377"/>
        <dbReference type="ChEBI" id="CHEBI:15378"/>
        <dbReference type="ChEBI" id="CHEBI:57540"/>
        <dbReference type="ChEBI" id="CHEBI:57945"/>
        <dbReference type="ChEBI" id="CHEBI:144896"/>
        <dbReference type="ChEBI" id="CHEBI:356010"/>
    </reaction>
    <physiologicalReaction direction="left-to-right" evidence="1">
        <dbReference type="Rhea" id="RHEA:61633"/>
    </physiologicalReaction>
</comment>
<comment type="pathway">
    <text evidence="1">Amine and polyamine degradation; putrescine degradation; 4-aminobutanoate from 4-aminobutanal: step 1/1.</text>
</comment>
<comment type="pathway">
    <text evidence="1">Amino-acid degradation.</text>
</comment>
<comment type="subunit">
    <text evidence="1">Homotetramer.</text>
</comment>
<comment type="miscellaneous">
    <text evidence="1">4-aminobutanal can spontaneously cyclize to 1-pyrroline, and 5-aminopentanal to 1-piperideine.</text>
</comment>
<comment type="similarity">
    <text evidence="1">Belongs to the aldehyde dehydrogenase family. Gamma-aminobutyraldehyde dehydrogenase subfamily.</text>
</comment>
<comment type="sequence caution" evidence="2">
    <conflict type="erroneous initiation">
        <sequence resource="EMBL-CDS" id="AAL20515"/>
    </conflict>
</comment>
<feature type="chain" id="PRO_0000269700" description="Gamma-aminobutyraldehyde dehydrogenase">
    <location>
        <begin position="1"/>
        <end position="474"/>
    </location>
</feature>
<feature type="active site" evidence="1">
    <location>
        <position position="246"/>
    </location>
</feature>
<feature type="active site" description="Nucleophile" evidence="1">
    <location>
        <position position="280"/>
    </location>
</feature>
<feature type="binding site" evidence="1">
    <location>
        <begin position="146"/>
        <end position="148"/>
    </location>
    <ligand>
        <name>NAD(+)</name>
        <dbReference type="ChEBI" id="CHEBI:57540"/>
    </ligand>
</feature>
<feature type="binding site" evidence="1">
    <location>
        <begin position="172"/>
        <end position="175"/>
    </location>
    <ligand>
        <name>NAD(+)</name>
        <dbReference type="ChEBI" id="CHEBI:57540"/>
    </ligand>
</feature>
<feature type="binding site" evidence="1">
    <location>
        <position position="209"/>
    </location>
    <ligand>
        <name>NAD(+)</name>
        <dbReference type="ChEBI" id="CHEBI:57540"/>
    </ligand>
</feature>
<feature type="binding site" evidence="1">
    <location>
        <begin position="225"/>
        <end position="228"/>
    </location>
    <ligand>
        <name>NAD(+)</name>
        <dbReference type="ChEBI" id="CHEBI:57540"/>
    </ligand>
</feature>
<feature type="binding site" evidence="1">
    <location>
        <position position="280"/>
    </location>
    <ligand>
        <name>NAD(+)</name>
        <dbReference type="ChEBI" id="CHEBI:57540"/>
    </ligand>
</feature>
<feature type="strand" evidence="3">
    <location>
        <begin position="5"/>
        <end position="7"/>
    </location>
</feature>
<feature type="strand" evidence="3">
    <location>
        <begin position="10"/>
        <end position="12"/>
    </location>
</feature>
<feature type="strand" evidence="3">
    <location>
        <begin position="18"/>
        <end position="22"/>
    </location>
</feature>
<feature type="turn" evidence="3">
    <location>
        <begin position="24"/>
        <end position="26"/>
    </location>
</feature>
<feature type="strand" evidence="3">
    <location>
        <begin position="29"/>
        <end position="34"/>
    </location>
</feature>
<feature type="helix" evidence="3">
    <location>
        <begin position="38"/>
        <end position="55"/>
    </location>
</feature>
<feature type="helix" evidence="3">
    <location>
        <begin position="60"/>
        <end position="76"/>
    </location>
</feature>
<feature type="helix" evidence="3">
    <location>
        <begin position="78"/>
        <end position="89"/>
    </location>
</feature>
<feature type="helix" evidence="3">
    <location>
        <begin position="93"/>
        <end position="98"/>
    </location>
</feature>
<feature type="helix" evidence="3">
    <location>
        <begin position="100"/>
        <end position="114"/>
    </location>
</feature>
<feature type="strand" evidence="3">
    <location>
        <begin position="119"/>
        <end position="121"/>
    </location>
</feature>
<feature type="strand" evidence="3">
    <location>
        <begin position="123"/>
        <end position="127"/>
    </location>
</feature>
<feature type="strand" evidence="3">
    <location>
        <begin position="130"/>
        <end position="138"/>
    </location>
</feature>
<feature type="strand" evidence="3">
    <location>
        <begin position="140"/>
        <end position="145"/>
    </location>
</feature>
<feature type="strand" evidence="3">
    <location>
        <begin position="148"/>
        <end position="150"/>
    </location>
</feature>
<feature type="helix" evidence="3">
    <location>
        <begin position="151"/>
        <end position="164"/>
    </location>
</feature>
<feature type="strand" evidence="3">
    <location>
        <begin position="168"/>
        <end position="172"/>
    </location>
</feature>
<feature type="strand" evidence="3">
    <location>
        <begin position="175"/>
        <end position="177"/>
    </location>
</feature>
<feature type="helix" evidence="3">
    <location>
        <begin position="179"/>
        <end position="188"/>
    </location>
</feature>
<feature type="turn" evidence="3">
    <location>
        <begin position="189"/>
        <end position="191"/>
    </location>
</feature>
<feature type="turn" evidence="3">
    <location>
        <begin position="194"/>
        <end position="196"/>
    </location>
</feature>
<feature type="strand" evidence="3">
    <location>
        <begin position="197"/>
        <end position="199"/>
    </location>
</feature>
<feature type="turn" evidence="3">
    <location>
        <begin position="204"/>
        <end position="207"/>
    </location>
</feature>
<feature type="helix" evidence="3">
    <location>
        <begin position="208"/>
        <end position="212"/>
    </location>
</feature>
<feature type="strand" evidence="3">
    <location>
        <begin position="219"/>
        <end position="224"/>
    </location>
</feature>
<feature type="helix" evidence="3">
    <location>
        <begin position="226"/>
        <end position="235"/>
    </location>
</feature>
<feature type="turn" evidence="3">
    <location>
        <begin position="237"/>
        <end position="240"/>
    </location>
</feature>
<feature type="strand" evidence="3">
    <location>
        <begin position="242"/>
        <end position="246"/>
    </location>
</feature>
<feature type="strand" evidence="3">
    <location>
        <begin position="252"/>
        <end position="255"/>
    </location>
</feature>
<feature type="helix" evidence="3">
    <location>
        <begin position="261"/>
        <end position="271"/>
    </location>
</feature>
<feature type="helix" evidence="3">
    <location>
        <begin position="274"/>
        <end position="277"/>
    </location>
</feature>
<feature type="strand" evidence="3">
    <location>
        <begin position="285"/>
        <end position="289"/>
    </location>
</feature>
<feature type="helix" evidence="3">
    <location>
        <begin position="290"/>
        <end position="305"/>
    </location>
</feature>
<feature type="helix" evidence="3">
    <location>
        <begin position="325"/>
        <end position="340"/>
    </location>
</feature>
<feature type="strand" evidence="3">
    <location>
        <begin position="345"/>
        <end position="348"/>
    </location>
</feature>
<feature type="strand" evidence="3">
    <location>
        <begin position="354"/>
        <end position="357"/>
    </location>
</feature>
<feature type="strand" evidence="3">
    <location>
        <begin position="363"/>
        <end position="367"/>
    </location>
</feature>
<feature type="helix" evidence="3">
    <location>
        <begin position="373"/>
        <end position="376"/>
    </location>
</feature>
<feature type="strand" evidence="3">
    <location>
        <begin position="381"/>
        <end position="389"/>
    </location>
</feature>
<feature type="helix" evidence="3">
    <location>
        <begin position="392"/>
        <end position="400"/>
    </location>
</feature>
<feature type="strand" evidence="3">
    <location>
        <begin position="401"/>
        <end position="403"/>
    </location>
</feature>
<feature type="strand" evidence="3">
    <location>
        <begin position="408"/>
        <end position="411"/>
    </location>
</feature>
<feature type="helix" evidence="3">
    <location>
        <begin position="415"/>
        <end position="424"/>
    </location>
</feature>
<feature type="strand" evidence="3">
    <location>
        <begin position="427"/>
        <end position="433"/>
    </location>
</feature>
<feature type="helix" evidence="3">
    <location>
        <begin position="448"/>
        <end position="450"/>
    </location>
</feature>
<feature type="strand" evidence="3">
    <location>
        <begin position="451"/>
        <end position="453"/>
    </location>
</feature>
<feature type="helix" evidence="3">
    <location>
        <begin position="457"/>
        <end position="462"/>
    </location>
</feature>
<feature type="strand" evidence="3">
    <location>
        <begin position="465"/>
        <end position="473"/>
    </location>
</feature>
<protein>
    <recommendedName>
        <fullName evidence="1">Gamma-aminobutyraldehyde dehydrogenase</fullName>
        <shortName evidence="1">ABALDH</shortName>
        <ecNumber evidence="1">1.2.1.19</ecNumber>
    </recommendedName>
    <alternativeName>
        <fullName evidence="1">1-pyrroline dehydrogenase</fullName>
    </alternativeName>
    <alternativeName>
        <fullName evidence="1">4-aminobutanal dehydrogenase</fullName>
    </alternativeName>
    <alternativeName>
        <fullName evidence="1">5-aminopentanal dehydrogenase</fullName>
        <ecNumber evidence="1">1.2.1.-</ecNumber>
    </alternativeName>
</protein>
<sequence>MQYQLLINGVLVDGEGERQSVYNPATGEVILEIAEASPAQVDAAVQAADNAFAEWGQTTPKARAECLLKLADSIEQNALEFARLESQNCGKPLHCVINDEIPAIVDVFRFFAGAARCLSGLAAGEYLEGHTSMIRRDPIGVVASIAPWNYPLMMAAWKLAPALAAGNCVVIKPSEITPLTALKLAVLAKDIFPPGVLNVLFGRGQTVGDVLTGHEKVRMVSLTGSIATGEHILRHTAPAIKRTHMELGGKAPVIVFDDADLDAVAQGVRTFGFYNAGQDCTAACRIYAQRGIYDALVEKLGNAVSSLKMGAPEDESTELGPLSSLAHLKRVTAAVEEAKALSHIRVITGGSQTEGKGYYFAPTLLADAKQEDAIVQREVFGPVVSITVFDDEDQVLRWANDSRYGLASSVWTQDVGRAHRLSARLQYGCTWINTHFMLVSEMPHGGQKQSGYGKDMSLYGLEDYTLVRHIMVKH</sequence>
<dbReference type="EC" id="1.2.1.19" evidence="1"/>
<dbReference type="EC" id="1.2.1.-" evidence="1"/>
<dbReference type="EMBL" id="AE006468">
    <property type="protein sequence ID" value="AAL20515.1"/>
    <property type="status" value="ALT_INIT"/>
    <property type="molecule type" value="Genomic_DNA"/>
</dbReference>
<dbReference type="PDB" id="6C43">
    <property type="method" value="X-ray"/>
    <property type="resolution" value="2.90 A"/>
    <property type="chains" value="A/B/C/D/E/F/G/H=1-474"/>
</dbReference>
<dbReference type="PDBsum" id="6C43"/>
<dbReference type="SMR" id="Q8ZPC9"/>
<dbReference type="STRING" id="99287.STM1597"/>
<dbReference type="PaxDb" id="99287-STM1597"/>
<dbReference type="KEGG" id="stm:STM1597"/>
<dbReference type="PATRIC" id="fig|99287.12.peg.1688"/>
<dbReference type="HOGENOM" id="CLU_005391_0_2_6"/>
<dbReference type="OMA" id="VRHVMIK"/>
<dbReference type="PhylomeDB" id="Q8ZPC9"/>
<dbReference type="UniPathway" id="UPA00188">
    <property type="reaction ID" value="UER00292"/>
</dbReference>
<dbReference type="Proteomes" id="UP000001014">
    <property type="component" value="Chromosome"/>
</dbReference>
<dbReference type="GO" id="GO:0019145">
    <property type="term" value="F:aminobutyraldehyde dehydrogenase (NAD+) activity"/>
    <property type="evidence" value="ECO:0007669"/>
    <property type="project" value="UniProtKB-UniRule"/>
</dbReference>
<dbReference type="GO" id="GO:0051287">
    <property type="term" value="F:NAD binding"/>
    <property type="evidence" value="ECO:0007669"/>
    <property type="project" value="UniProtKB-UniRule"/>
</dbReference>
<dbReference type="GO" id="GO:0019477">
    <property type="term" value="P:L-lysine catabolic process"/>
    <property type="evidence" value="ECO:0007669"/>
    <property type="project" value="UniProtKB-UniRule"/>
</dbReference>
<dbReference type="GO" id="GO:0009447">
    <property type="term" value="P:putrescine catabolic process"/>
    <property type="evidence" value="ECO:0007669"/>
    <property type="project" value="UniProtKB-UniRule"/>
</dbReference>
<dbReference type="CDD" id="cd07092">
    <property type="entry name" value="ALDH_ABALDH-YdcW"/>
    <property type="match status" value="1"/>
</dbReference>
<dbReference type="FunFam" id="3.40.605.10:FF:000001">
    <property type="entry name" value="Aldehyde dehydrogenase 1"/>
    <property type="match status" value="1"/>
</dbReference>
<dbReference type="FunFam" id="3.40.309.10:FF:000010">
    <property type="entry name" value="Gamma-aminobutyraldehyde dehydrogenase"/>
    <property type="match status" value="1"/>
</dbReference>
<dbReference type="Gene3D" id="3.40.605.10">
    <property type="entry name" value="Aldehyde Dehydrogenase, Chain A, domain 1"/>
    <property type="match status" value="1"/>
</dbReference>
<dbReference type="Gene3D" id="3.40.309.10">
    <property type="entry name" value="Aldehyde Dehydrogenase, Chain A, domain 2"/>
    <property type="match status" value="1"/>
</dbReference>
<dbReference type="HAMAP" id="MF_01275">
    <property type="entry name" value="Aldedh_Prr"/>
    <property type="match status" value="1"/>
</dbReference>
<dbReference type="InterPro" id="IPR016161">
    <property type="entry name" value="Ald_DH/histidinol_DH"/>
</dbReference>
<dbReference type="InterPro" id="IPR016163">
    <property type="entry name" value="Ald_DH_C"/>
</dbReference>
<dbReference type="InterPro" id="IPR029510">
    <property type="entry name" value="Ald_DH_CS_GLU"/>
</dbReference>
<dbReference type="InterPro" id="IPR016162">
    <property type="entry name" value="Ald_DH_N"/>
</dbReference>
<dbReference type="InterPro" id="IPR015590">
    <property type="entry name" value="Aldehyde_DH_dom"/>
</dbReference>
<dbReference type="InterPro" id="IPR015657">
    <property type="entry name" value="Aminobutyraldehyde_DH"/>
</dbReference>
<dbReference type="InterPro" id="IPR017749">
    <property type="entry name" value="PatD"/>
</dbReference>
<dbReference type="NCBIfam" id="TIGR03374">
    <property type="entry name" value="ABALDH"/>
    <property type="match status" value="1"/>
</dbReference>
<dbReference type="NCBIfam" id="NF010000">
    <property type="entry name" value="PRK13473.1"/>
    <property type="match status" value="1"/>
</dbReference>
<dbReference type="PANTHER" id="PTHR11699">
    <property type="entry name" value="ALDEHYDE DEHYDROGENASE-RELATED"/>
    <property type="match status" value="1"/>
</dbReference>
<dbReference type="Pfam" id="PF00171">
    <property type="entry name" value="Aldedh"/>
    <property type="match status" value="1"/>
</dbReference>
<dbReference type="SUPFAM" id="SSF53720">
    <property type="entry name" value="ALDH-like"/>
    <property type="match status" value="1"/>
</dbReference>
<dbReference type="PROSITE" id="PS00687">
    <property type="entry name" value="ALDEHYDE_DEHYDR_GLU"/>
    <property type="match status" value="1"/>
</dbReference>
<accession>Q8ZPC9</accession>
<keyword id="KW-0002">3D-structure</keyword>
<keyword id="KW-0520">NAD</keyword>
<keyword id="KW-0560">Oxidoreductase</keyword>
<keyword id="KW-1185">Reference proteome</keyword>
<gene>
    <name evidence="1" type="primary">patD</name>
    <name type="ordered locus">STM1597</name>
</gene>